<protein>
    <recommendedName>
        <fullName evidence="1">DNA dC-&gt;dU-editing enzyme APOBEC-3G</fullName>
        <ecNumber evidence="1">3.5.4.38</ecNumber>
    </recommendedName>
    <alternativeName>
        <fullName>Deoxycytidine deaminase</fullName>
    </alternativeName>
</protein>
<feature type="chain" id="PRO_0000171766" description="DNA dC-&gt;dU-editing enzyme APOBEC-3G">
    <location>
        <begin position="1"/>
        <end position="384"/>
    </location>
</feature>
<feature type="domain" description="CMP/dCMP-type deaminase 1" evidence="2">
    <location>
        <begin position="29"/>
        <end position="138"/>
    </location>
</feature>
<feature type="domain" description="CMP/dCMP-type deaminase 2" evidence="2">
    <location>
        <begin position="214"/>
        <end position="328"/>
    </location>
</feature>
<feature type="region of interest" description="Essential for cytoplasmic localization" evidence="3">
    <location>
        <begin position="1"/>
        <end position="60"/>
    </location>
</feature>
<feature type="region of interest" description="Necessary for homooligomerization" evidence="3">
    <location>
        <begin position="209"/>
        <end position="336"/>
    </location>
</feature>
<feature type="region of interest" description="Interaction with DNA" evidence="3">
    <location>
        <begin position="213"/>
        <end position="215"/>
    </location>
</feature>
<feature type="region of interest" description="Interaction with DNA" evidence="3">
    <location>
        <begin position="313"/>
        <end position="320"/>
    </location>
</feature>
<feature type="active site" description="Proton donor" evidence="2">
    <location>
        <position position="259"/>
    </location>
</feature>
<feature type="binding site" evidence="2">
    <location>
        <position position="65"/>
    </location>
    <ligand>
        <name>Zn(2+)</name>
        <dbReference type="ChEBI" id="CHEBI:29105"/>
        <label>1</label>
    </ligand>
</feature>
<feature type="binding site" evidence="2">
    <location>
        <position position="97"/>
    </location>
    <ligand>
        <name>Zn(2+)</name>
        <dbReference type="ChEBI" id="CHEBI:29105"/>
        <label>1</label>
    </ligand>
</feature>
<feature type="binding site" evidence="2">
    <location>
        <position position="100"/>
    </location>
    <ligand>
        <name>Zn(2+)</name>
        <dbReference type="ChEBI" id="CHEBI:29105"/>
        <label>1</label>
    </ligand>
</feature>
<feature type="binding site" evidence="1">
    <location>
        <position position="257"/>
    </location>
    <ligand>
        <name>Zn(2+)</name>
        <dbReference type="ChEBI" id="CHEBI:29105"/>
        <label>2</label>
        <note>catalytic</note>
    </ligand>
</feature>
<feature type="binding site" evidence="1">
    <location>
        <position position="288"/>
    </location>
    <ligand>
        <name>Zn(2+)</name>
        <dbReference type="ChEBI" id="CHEBI:29105"/>
        <label>2</label>
        <note>catalytic</note>
    </ligand>
</feature>
<feature type="binding site" evidence="1">
    <location>
        <position position="291"/>
    </location>
    <ligand>
        <name>Zn(2+)</name>
        <dbReference type="ChEBI" id="CHEBI:29105"/>
        <label>2</label>
        <note>catalytic</note>
    </ligand>
</feature>
<feature type="site" description="Interaction with DNA" evidence="3">
    <location>
        <position position="244"/>
    </location>
</feature>
<feature type="modified residue" description="Phosphothreonine; by PKA" evidence="1">
    <location>
        <position position="32"/>
    </location>
</feature>
<feature type="modified residue" description="Phosphothreonine; by PKA and CAMK2" evidence="1">
    <location>
        <position position="218"/>
    </location>
</feature>
<feature type="sequence conflict" description="In Ref. 2; AAT72156." evidence="3" ref="2">
    <original>G</original>
    <variation>E</variation>
    <location>
        <position position="373"/>
    </location>
</feature>
<feature type="sequence conflict" description="In Ref. 2; AAT72156." evidence="3" ref="2">
    <original>R</original>
    <variation>Q</variation>
    <location>
        <position position="376"/>
    </location>
</feature>
<gene>
    <name type="primary">APOBEC3G</name>
</gene>
<accession>Q694B6</accession>
<accession>Q6DVQ1</accession>
<keyword id="KW-0051">Antiviral defense</keyword>
<keyword id="KW-0963">Cytoplasm</keyword>
<keyword id="KW-0378">Hydrolase</keyword>
<keyword id="KW-0391">Immunity</keyword>
<keyword id="KW-0399">Innate immunity</keyword>
<keyword id="KW-0479">Metal-binding</keyword>
<keyword id="KW-0539">Nucleus</keyword>
<keyword id="KW-0597">Phosphoprotein</keyword>
<keyword id="KW-1185">Reference proteome</keyword>
<keyword id="KW-0677">Repeat</keyword>
<keyword id="KW-0862">Zinc</keyword>
<dbReference type="EC" id="3.5.4.38" evidence="1"/>
<dbReference type="EMBL" id="AY622593">
    <property type="protein sequence ID" value="AAT44399.1"/>
    <property type="molecule type" value="Genomic_DNA"/>
</dbReference>
<dbReference type="EMBL" id="AY622586">
    <property type="protein sequence ID" value="AAT44399.1"/>
    <property type="status" value="JOINED"/>
    <property type="molecule type" value="Genomic_DNA"/>
</dbReference>
<dbReference type="EMBL" id="AY622587">
    <property type="protein sequence ID" value="AAT44399.1"/>
    <property type="status" value="JOINED"/>
    <property type="molecule type" value="Genomic_DNA"/>
</dbReference>
<dbReference type="EMBL" id="AY622588">
    <property type="protein sequence ID" value="AAT44399.1"/>
    <property type="status" value="JOINED"/>
    <property type="molecule type" value="Genomic_DNA"/>
</dbReference>
<dbReference type="EMBL" id="AY622589">
    <property type="protein sequence ID" value="AAT44399.1"/>
    <property type="status" value="JOINED"/>
    <property type="molecule type" value="Genomic_DNA"/>
</dbReference>
<dbReference type="EMBL" id="AY622590">
    <property type="protein sequence ID" value="AAT44399.1"/>
    <property type="status" value="JOINED"/>
    <property type="molecule type" value="Genomic_DNA"/>
</dbReference>
<dbReference type="EMBL" id="AY622591">
    <property type="protein sequence ID" value="AAT44399.1"/>
    <property type="status" value="JOINED"/>
    <property type="molecule type" value="Genomic_DNA"/>
</dbReference>
<dbReference type="EMBL" id="AY622592">
    <property type="protein sequence ID" value="AAT44399.1"/>
    <property type="status" value="JOINED"/>
    <property type="molecule type" value="Genomic_DNA"/>
</dbReference>
<dbReference type="EMBL" id="AY639867">
    <property type="protein sequence ID" value="AAT72156.1"/>
    <property type="molecule type" value="mRNA"/>
</dbReference>
<dbReference type="SMR" id="Q694B6"/>
<dbReference type="STRING" id="9597.ENSPPAP00000020141"/>
<dbReference type="eggNOG" id="KOG4075">
    <property type="taxonomic scope" value="Eukaryota"/>
</dbReference>
<dbReference type="Proteomes" id="UP000240080">
    <property type="component" value="Unplaced"/>
</dbReference>
<dbReference type="GO" id="GO:0005737">
    <property type="term" value="C:cytoplasm"/>
    <property type="evidence" value="ECO:0000250"/>
    <property type="project" value="UniProtKB"/>
</dbReference>
<dbReference type="GO" id="GO:0005634">
    <property type="term" value="C:nucleus"/>
    <property type="evidence" value="ECO:0007669"/>
    <property type="project" value="UniProtKB-SubCell"/>
</dbReference>
<dbReference type="GO" id="GO:0000932">
    <property type="term" value="C:P-body"/>
    <property type="evidence" value="ECO:0000250"/>
    <property type="project" value="UniProtKB"/>
</dbReference>
<dbReference type="GO" id="GO:1990904">
    <property type="term" value="C:ribonucleoprotein complex"/>
    <property type="evidence" value="ECO:0000250"/>
    <property type="project" value="UniProtKB"/>
</dbReference>
<dbReference type="GO" id="GO:0004126">
    <property type="term" value="F:cytidine deaminase activity"/>
    <property type="evidence" value="ECO:0000250"/>
    <property type="project" value="UniProtKB"/>
</dbReference>
<dbReference type="GO" id="GO:0003723">
    <property type="term" value="F:RNA binding"/>
    <property type="evidence" value="ECO:0007669"/>
    <property type="project" value="TreeGrafter"/>
</dbReference>
<dbReference type="GO" id="GO:0008270">
    <property type="term" value="F:zinc ion binding"/>
    <property type="evidence" value="ECO:0007669"/>
    <property type="project" value="InterPro"/>
</dbReference>
<dbReference type="GO" id="GO:0009972">
    <property type="term" value="P:cytidine deamination"/>
    <property type="evidence" value="ECO:0000250"/>
    <property type="project" value="UniProtKB"/>
</dbReference>
<dbReference type="GO" id="GO:0016554">
    <property type="term" value="P:cytidine to uridine editing"/>
    <property type="evidence" value="ECO:0007669"/>
    <property type="project" value="TreeGrafter"/>
</dbReference>
<dbReference type="GO" id="GO:0051607">
    <property type="term" value="P:defense response to virus"/>
    <property type="evidence" value="ECO:0000250"/>
    <property type="project" value="UniProtKB"/>
</dbReference>
<dbReference type="GO" id="GO:0070383">
    <property type="term" value="P:DNA cytosine deamination"/>
    <property type="evidence" value="ECO:0007669"/>
    <property type="project" value="TreeGrafter"/>
</dbReference>
<dbReference type="GO" id="GO:0045087">
    <property type="term" value="P:innate immune response"/>
    <property type="evidence" value="ECO:0007669"/>
    <property type="project" value="UniProtKB-KW"/>
</dbReference>
<dbReference type="GO" id="GO:0045869">
    <property type="term" value="P:negative regulation of single stranded viral RNA replication via double stranded DNA intermediate"/>
    <property type="evidence" value="ECO:0007669"/>
    <property type="project" value="TreeGrafter"/>
</dbReference>
<dbReference type="GO" id="GO:0010526">
    <property type="term" value="P:transposable element silencing"/>
    <property type="evidence" value="ECO:0000250"/>
    <property type="project" value="UniProtKB"/>
</dbReference>
<dbReference type="CDD" id="cd01283">
    <property type="entry name" value="cytidine_deaminase"/>
    <property type="match status" value="2"/>
</dbReference>
<dbReference type="FunFam" id="3.40.140.10:FF:000029">
    <property type="entry name" value="DNA dC-&gt;dU-editing enzyme APOBEC-3G"/>
    <property type="match status" value="2"/>
</dbReference>
<dbReference type="Gene3D" id="3.40.140.10">
    <property type="entry name" value="Cytidine Deaminase, domain 2"/>
    <property type="match status" value="2"/>
</dbReference>
<dbReference type="InterPro" id="IPR016192">
    <property type="entry name" value="APOBEC/CMP_deaminase_Zn-bd"/>
</dbReference>
<dbReference type="InterPro" id="IPR050610">
    <property type="entry name" value="APOBEC_Cyt_Deaminase"/>
</dbReference>
<dbReference type="InterPro" id="IPR002125">
    <property type="entry name" value="CMP_dCMP_dom"/>
</dbReference>
<dbReference type="InterPro" id="IPR016193">
    <property type="entry name" value="Cytidine_deaminase-like"/>
</dbReference>
<dbReference type="PANTHER" id="PTHR13857:SF20">
    <property type="entry name" value="DNA DC-DU-EDITING ENZYME APOBEC-3G"/>
    <property type="match status" value="1"/>
</dbReference>
<dbReference type="PANTHER" id="PTHR13857">
    <property type="entry name" value="MRNA EDITING ENZYME"/>
    <property type="match status" value="1"/>
</dbReference>
<dbReference type="Pfam" id="PF18782">
    <property type="entry name" value="NAD2"/>
    <property type="match status" value="2"/>
</dbReference>
<dbReference type="SUPFAM" id="SSF53927">
    <property type="entry name" value="Cytidine deaminase-like"/>
    <property type="match status" value="1"/>
</dbReference>
<dbReference type="PROSITE" id="PS00903">
    <property type="entry name" value="CYT_DCMP_DEAMINASES_1"/>
    <property type="match status" value="1"/>
</dbReference>
<dbReference type="PROSITE" id="PS51747">
    <property type="entry name" value="CYT_DCMP_DEAMINASES_2"/>
    <property type="match status" value="2"/>
</dbReference>
<proteinExistence type="evidence at transcript level"/>
<sequence length="384" mass="46079">MKPHFRNPVERMYQDTFSDNFYNRPILSRRNTVWLCYEVKTKGPSRPPLDAKIFRGQVYSKLKYHPEMRFFHWFSKWRKLHRDQEYEVTWYISWSPCTKCTRDVATFLAEDPKVTLTIFVARLYYFWDPDYQEALRSLCQKRDGPRATMKIMNYDEFQHCWSKFVYSQRELFEPWNNLPKYYILLHIMLGEILRHSMDPPTFTSNFNNELWVRGRHETYLCYEVERLHNDTRVLLNQRRGFLCNQAPHKHGFLEGRHAELCFLDVIPFWKLDLHQDYRVTCFTSWSPCFSCAQEMAKFISNNKHVSLCIFAARIYDDQGRCQEGLRTLAKAGAEISIMTYSEFKHCWDTFVDHQGCPFQPWDGLEEHSQALSGRLRAILQNQGN</sequence>
<name>ABC3G_PANPA</name>
<comment type="function">
    <text evidence="1">DNA deaminase (cytidine deaminase) which acts as an inhibitor of retrovirus replication and retrotransposon mobility via deaminase-dependent and -independent mechanisms. After the penetration of retroviral nucleocapsids into target cells of infection and the initiation of reverse transcription, it can induce the conversion of cytosine to uracil in the minus-sense single-strand viral DNA, leading to G-to-A hypermutations in the subsequent plus-strand viral DNA. The resultant detrimental levels of mutations in the proviral genome, along with a deamination-independent mechanism that works prior to the proviral integration, together exert efficient antiretroviral effects in infected target cells. Selectively targets single-stranded DNA and does not deaminate double-stranded DNA or single- or double-stranded RNA. May inhibit the mobility of LTR retrotransposons (By similarity).</text>
</comment>
<comment type="catalytic activity">
    <reaction evidence="1">
        <text>a 2'-deoxycytidine in single-stranded DNA + H2O + H(+) = a 2'-deoxyuridine in single-stranded DNA + NH4(+)</text>
        <dbReference type="Rhea" id="RHEA:50948"/>
        <dbReference type="Rhea" id="RHEA-COMP:12846"/>
        <dbReference type="Rhea" id="RHEA-COMP:12847"/>
        <dbReference type="ChEBI" id="CHEBI:15377"/>
        <dbReference type="ChEBI" id="CHEBI:15378"/>
        <dbReference type="ChEBI" id="CHEBI:28938"/>
        <dbReference type="ChEBI" id="CHEBI:85452"/>
        <dbReference type="ChEBI" id="CHEBI:133902"/>
        <dbReference type="EC" id="3.5.4.38"/>
    </reaction>
</comment>
<comment type="cofactor">
    <cofactor evidence="1">
        <name>Zn(2+)</name>
        <dbReference type="ChEBI" id="CHEBI:29105"/>
    </cofactor>
</comment>
<comment type="subunit">
    <text evidence="1">Homodimer. Homooligomer. Can bind RNA to form ribonucleoprotein complexes of high-molecular-mass (HMM) or low-molecular-mass (LMM). HMM is inactive and heterogeneous in protein composition because of binding nonselectively to cellular RNAs, which in turn are associated with variety of cellular proteins. The LMM form which is enzymatically active has few or no RNAs associated. Its ability to form homooligomer is distinct from its ability to assemble into HMM. Interacts with APOBEC3B, APOBEC3F, MOV10, AGO2, EIF4E, EIF4ENIF1, DCP2 and DDX6 in an RNA-dependent manner. Interacts with AGO1, AGO3 and PKA/PRKACA (By similarity).</text>
</comment>
<comment type="subcellular location">
    <subcellularLocation>
        <location evidence="1">Cytoplasm</location>
    </subcellularLocation>
    <subcellularLocation>
        <location evidence="1">Nucleus</location>
    </subcellularLocation>
    <subcellularLocation>
        <location evidence="1">Cytoplasm</location>
        <location evidence="1">P-body</location>
    </subcellularLocation>
    <text evidence="1">Mainly cytoplasmic, small amount are found in the nucleus.</text>
</comment>
<comment type="domain">
    <text evidence="1">The CMP/dCMP deaminase domain 1 mediates RNA binding, RNA-dependent oligomerization and virion incorporation whereas the CMP/dCMP deaminase domain 2 confers deoxycytidine deaminase activity and substrate sequence specificity.</text>
</comment>
<comment type="similarity">
    <text evidence="3">Belongs to the cytidine and deoxycytidylate deaminase family.</text>
</comment>
<reference key="1">
    <citation type="journal article" date="2004" name="PLoS Biol.">
        <title>Ancient adaptive evolution of the primate antiviral DNA-editing enzyme APOBEC3G.</title>
        <authorList>
            <person name="Sawyer S.L."/>
            <person name="Emerman M."/>
            <person name="Malik H.S."/>
        </authorList>
    </citation>
    <scope>NUCLEOTIDE SEQUENCE [GENOMIC DNA]</scope>
</reference>
<reference key="2">
    <citation type="journal article" date="2004" name="Hum. Mol. Genet.">
        <title>Rapid evolution of primate antiviral enzyme APOBEC3G.</title>
        <authorList>
            <person name="Zhang J."/>
            <person name="Webb D.M."/>
        </authorList>
    </citation>
    <scope>NUCLEOTIDE SEQUENCE [MRNA] OF 1-380</scope>
</reference>
<evidence type="ECO:0000250" key="1">
    <source>
        <dbReference type="UniProtKB" id="Q9HC16"/>
    </source>
</evidence>
<evidence type="ECO:0000255" key="2">
    <source>
        <dbReference type="PROSITE-ProRule" id="PRU01083"/>
    </source>
</evidence>
<evidence type="ECO:0000305" key="3"/>
<organism>
    <name type="scientific">Pan paniscus</name>
    <name type="common">Pygmy chimpanzee</name>
    <name type="synonym">Bonobo</name>
    <dbReference type="NCBI Taxonomy" id="9597"/>
    <lineage>
        <taxon>Eukaryota</taxon>
        <taxon>Metazoa</taxon>
        <taxon>Chordata</taxon>
        <taxon>Craniata</taxon>
        <taxon>Vertebrata</taxon>
        <taxon>Euteleostomi</taxon>
        <taxon>Mammalia</taxon>
        <taxon>Eutheria</taxon>
        <taxon>Euarchontoglires</taxon>
        <taxon>Primates</taxon>
        <taxon>Haplorrhini</taxon>
        <taxon>Catarrhini</taxon>
        <taxon>Hominidae</taxon>
        <taxon>Pan</taxon>
    </lineage>
</organism>